<protein>
    <recommendedName>
        <fullName evidence="1">Mannonate dehydratase</fullName>
        <ecNumber evidence="1">4.2.1.8</ecNumber>
    </recommendedName>
    <alternativeName>
        <fullName evidence="1">D-mannonate hydro-lyase</fullName>
    </alternativeName>
</protein>
<keyword id="KW-0408">Iron</keyword>
<keyword id="KW-0456">Lyase</keyword>
<keyword id="KW-0464">Manganese</keyword>
<proteinExistence type="inferred from homology"/>
<reference key="1">
    <citation type="journal article" date="2005" name="J. Bacteriol.">
        <title>Whole-genome sequencing of Staphylococcus haemolyticus uncovers the extreme plasticity of its genome and the evolution of human-colonizing staphylococcal species.</title>
        <authorList>
            <person name="Takeuchi F."/>
            <person name="Watanabe S."/>
            <person name="Baba T."/>
            <person name="Yuzawa H."/>
            <person name="Ito T."/>
            <person name="Morimoto Y."/>
            <person name="Kuroda M."/>
            <person name="Cui L."/>
            <person name="Takahashi M."/>
            <person name="Ankai A."/>
            <person name="Baba S."/>
            <person name="Fukui S."/>
            <person name="Lee J.C."/>
            <person name="Hiramatsu K."/>
        </authorList>
    </citation>
    <scope>NUCLEOTIDE SEQUENCE [LARGE SCALE GENOMIC DNA]</scope>
    <source>
        <strain>JCSC1435</strain>
    </source>
</reference>
<name>UXUA_STAHJ</name>
<dbReference type="EC" id="4.2.1.8" evidence="1"/>
<dbReference type="EMBL" id="AP006716">
    <property type="protein sequence ID" value="BAE05956.1"/>
    <property type="molecule type" value="Genomic_DNA"/>
</dbReference>
<dbReference type="RefSeq" id="WP_011276886.1">
    <property type="nucleotide sequence ID" value="NC_007168.1"/>
</dbReference>
<dbReference type="SMR" id="Q4L321"/>
<dbReference type="GeneID" id="93781886"/>
<dbReference type="KEGG" id="sha:SH2647"/>
<dbReference type="eggNOG" id="COG1312">
    <property type="taxonomic scope" value="Bacteria"/>
</dbReference>
<dbReference type="HOGENOM" id="CLU_058621_1_0_9"/>
<dbReference type="OrthoDB" id="9780250at2"/>
<dbReference type="UniPathway" id="UPA00246"/>
<dbReference type="Proteomes" id="UP000000543">
    <property type="component" value="Chromosome"/>
</dbReference>
<dbReference type="GO" id="GO:0008198">
    <property type="term" value="F:ferrous iron binding"/>
    <property type="evidence" value="ECO:0007669"/>
    <property type="project" value="TreeGrafter"/>
</dbReference>
<dbReference type="GO" id="GO:0030145">
    <property type="term" value="F:manganese ion binding"/>
    <property type="evidence" value="ECO:0007669"/>
    <property type="project" value="TreeGrafter"/>
</dbReference>
<dbReference type="GO" id="GO:0008927">
    <property type="term" value="F:mannonate dehydratase activity"/>
    <property type="evidence" value="ECO:0007669"/>
    <property type="project" value="UniProtKB-UniRule"/>
</dbReference>
<dbReference type="GO" id="GO:0042840">
    <property type="term" value="P:D-glucuronate catabolic process"/>
    <property type="evidence" value="ECO:0007669"/>
    <property type="project" value="TreeGrafter"/>
</dbReference>
<dbReference type="Gene3D" id="3.20.20.150">
    <property type="entry name" value="Divalent-metal-dependent TIM barrel enzymes"/>
    <property type="match status" value="1"/>
</dbReference>
<dbReference type="HAMAP" id="MF_00106">
    <property type="entry name" value="UxuA"/>
    <property type="match status" value="1"/>
</dbReference>
<dbReference type="InterPro" id="IPR004628">
    <property type="entry name" value="Man_deHydtase"/>
</dbReference>
<dbReference type="InterPro" id="IPR036237">
    <property type="entry name" value="Xyl_isomerase-like_sf"/>
</dbReference>
<dbReference type="NCBIfam" id="NF003027">
    <property type="entry name" value="PRK03906.1"/>
    <property type="match status" value="2"/>
</dbReference>
<dbReference type="NCBIfam" id="TIGR00695">
    <property type="entry name" value="uxuA"/>
    <property type="match status" value="1"/>
</dbReference>
<dbReference type="PANTHER" id="PTHR30387">
    <property type="entry name" value="MANNONATE DEHYDRATASE"/>
    <property type="match status" value="1"/>
</dbReference>
<dbReference type="PANTHER" id="PTHR30387:SF2">
    <property type="entry name" value="MANNONATE DEHYDRATASE"/>
    <property type="match status" value="1"/>
</dbReference>
<dbReference type="Pfam" id="PF03786">
    <property type="entry name" value="UxuA"/>
    <property type="match status" value="1"/>
</dbReference>
<dbReference type="PIRSF" id="PIRSF016049">
    <property type="entry name" value="Man_dehyd"/>
    <property type="match status" value="1"/>
</dbReference>
<dbReference type="SUPFAM" id="SSF51658">
    <property type="entry name" value="Xylose isomerase-like"/>
    <property type="match status" value="1"/>
</dbReference>
<accession>Q4L321</accession>
<comment type="function">
    <text evidence="1">Catalyzes the dehydration of D-mannonate.</text>
</comment>
<comment type="catalytic activity">
    <reaction evidence="1">
        <text>D-mannonate = 2-dehydro-3-deoxy-D-gluconate + H2O</text>
        <dbReference type="Rhea" id="RHEA:20097"/>
        <dbReference type="ChEBI" id="CHEBI:15377"/>
        <dbReference type="ChEBI" id="CHEBI:17767"/>
        <dbReference type="ChEBI" id="CHEBI:57990"/>
        <dbReference type="EC" id="4.2.1.8"/>
    </reaction>
</comment>
<comment type="cofactor">
    <cofactor evidence="1">
        <name>Fe(2+)</name>
        <dbReference type="ChEBI" id="CHEBI:29033"/>
    </cofactor>
    <cofactor evidence="1">
        <name>Mn(2+)</name>
        <dbReference type="ChEBI" id="CHEBI:29035"/>
    </cofactor>
</comment>
<comment type="pathway">
    <text evidence="1">Carbohydrate metabolism; pentose and glucuronate interconversion.</text>
</comment>
<comment type="similarity">
    <text evidence="1">Belongs to the mannonate dehydratase family.</text>
</comment>
<sequence>MKMTFRWYGKDDPISLEYIKQIPGMKGIVSAIYDVPVGEVWPLDKIKALKQEIEDAGMELSVIESVPVHEDIKLGKPTRDKYIENYCETLRNLGQAGIKIVCYNFMPVFDWTRSQLDYRLDDGSTCLIYDEQDVEKMNPLSGELSLPGWDSSYTKEDLKQLFDDYKEVDEETLWDNLNYFIQKVIPVAEEEDVLMAIHPDDPPWNIFGLPRIITNKENLERFINLYDSKYNGLTMCSGSLGADRRNDFVDMLRYFGEKGRVNFVHARNVKLIGDKSFQESAHLSEKGSIDMYEVVKTLHSFDYHGPIRPDHGRMIWGETGKPGYGLYDRALGATYLNGLYEAVSKNNK</sequence>
<evidence type="ECO:0000255" key="1">
    <source>
        <dbReference type="HAMAP-Rule" id="MF_00106"/>
    </source>
</evidence>
<feature type="chain" id="PRO_0000231058" description="Mannonate dehydratase">
    <location>
        <begin position="1"/>
        <end position="348"/>
    </location>
</feature>
<organism>
    <name type="scientific">Staphylococcus haemolyticus (strain JCSC1435)</name>
    <dbReference type="NCBI Taxonomy" id="279808"/>
    <lineage>
        <taxon>Bacteria</taxon>
        <taxon>Bacillati</taxon>
        <taxon>Bacillota</taxon>
        <taxon>Bacilli</taxon>
        <taxon>Bacillales</taxon>
        <taxon>Staphylococcaceae</taxon>
        <taxon>Staphylococcus</taxon>
    </lineage>
</organism>
<gene>
    <name evidence="1" type="primary">uxuA</name>
    <name type="ordered locus">SH2647</name>
</gene>